<evidence type="ECO:0000255" key="1">
    <source>
        <dbReference type="HAMAP-Rule" id="MF_00909"/>
    </source>
</evidence>
<protein>
    <recommendedName>
        <fullName evidence="1">Cell division protein FtsZ</fullName>
    </recommendedName>
</protein>
<name>FTSZ_MYCKA</name>
<accession>Q9KH25</accession>
<keyword id="KW-0131">Cell cycle</keyword>
<keyword id="KW-0132">Cell division</keyword>
<keyword id="KW-0963">Cytoplasm</keyword>
<keyword id="KW-0342">GTP-binding</keyword>
<keyword id="KW-0547">Nucleotide-binding</keyword>
<keyword id="KW-0717">Septation</keyword>
<sequence length="386" mass="39053">MAPPHNYLAVIKVVGIGGGGVNAVNRMIEQGLKGVEFIAINTDAQALLMSDADVKLDVGRDSTRGLGAGADPEVGRXAAEDAKDDIEELLRGADMVFVTAGEGGGTGTGGAPVVASIARKLGALTVGVVTRPFSFEGKRRSNQAENGIQALRESCDTLIVIPNDRLLQMGDAAVSLMDAFRSADEVLLNGVXGITDLITTPGLINVDFADVKGVMSGAGTALMGIGSARGDGRALKAAEIAINSPLLEASMEGAQGVLLSVAGGSDLGLFEINEAASLVQDAAHPEANIIFGTVIDDSLGDEVRVTVIAAGFDSAGPSRKPVVSPSAAQTQPIASARAGKVTTSLFEPTDAVSVPAHTNGATVSVGGDGDGGIADDVVDVPPLMRR</sequence>
<comment type="function">
    <text evidence="1">Essential cell division protein that forms a contractile ring structure (Z ring) at the future cell division site. The regulation of the ring assembly controls the timing and the location of cell division. One of the functions of the FtsZ ring is to recruit other cell division proteins to the septum to produce a new cell wall between the dividing cells. Binds GTP and shows GTPase activity.</text>
</comment>
<comment type="subunit">
    <text evidence="1">Homodimer. Polymerizes to form a dynamic ring structure in a strictly GTP-dependent manner. Interacts directly with several other division proteins.</text>
</comment>
<comment type="subcellular location">
    <subcellularLocation>
        <location evidence="1">Cytoplasm</location>
    </subcellularLocation>
    <text evidence="1">Assembles at midcell at the inner surface of the cytoplasmic membrane.</text>
</comment>
<comment type="similarity">
    <text evidence="1">Belongs to the FtsZ family.</text>
</comment>
<dbReference type="EMBL" id="AF273451">
    <property type="protein sequence ID" value="AAF78784.2"/>
    <property type="molecule type" value="Genomic_DNA"/>
</dbReference>
<dbReference type="STRING" id="1768.B1T50_02555"/>
<dbReference type="GO" id="GO:0032153">
    <property type="term" value="C:cell division site"/>
    <property type="evidence" value="ECO:0007669"/>
    <property type="project" value="UniProtKB-UniRule"/>
</dbReference>
<dbReference type="GO" id="GO:0005737">
    <property type="term" value="C:cytoplasm"/>
    <property type="evidence" value="ECO:0007669"/>
    <property type="project" value="UniProtKB-SubCell"/>
</dbReference>
<dbReference type="GO" id="GO:0005525">
    <property type="term" value="F:GTP binding"/>
    <property type="evidence" value="ECO:0007669"/>
    <property type="project" value="UniProtKB-UniRule"/>
</dbReference>
<dbReference type="GO" id="GO:0003924">
    <property type="term" value="F:GTPase activity"/>
    <property type="evidence" value="ECO:0007669"/>
    <property type="project" value="UniProtKB-UniRule"/>
</dbReference>
<dbReference type="GO" id="GO:0000917">
    <property type="term" value="P:division septum assembly"/>
    <property type="evidence" value="ECO:0007669"/>
    <property type="project" value="UniProtKB-KW"/>
</dbReference>
<dbReference type="GO" id="GO:0043093">
    <property type="term" value="P:FtsZ-dependent cytokinesis"/>
    <property type="evidence" value="ECO:0007669"/>
    <property type="project" value="UniProtKB-UniRule"/>
</dbReference>
<dbReference type="GO" id="GO:0051258">
    <property type="term" value="P:protein polymerization"/>
    <property type="evidence" value="ECO:0007669"/>
    <property type="project" value="UniProtKB-UniRule"/>
</dbReference>
<dbReference type="CDD" id="cd02201">
    <property type="entry name" value="FtsZ_type1"/>
    <property type="match status" value="1"/>
</dbReference>
<dbReference type="FunFam" id="3.30.1330.20:FF:000005">
    <property type="entry name" value="Cell division protein FtsZ"/>
    <property type="match status" value="1"/>
</dbReference>
<dbReference type="FunFam" id="3.40.50.1440:FF:000001">
    <property type="entry name" value="Cell division protein FtsZ"/>
    <property type="match status" value="1"/>
</dbReference>
<dbReference type="Gene3D" id="3.30.1330.20">
    <property type="entry name" value="Tubulin/FtsZ, C-terminal domain"/>
    <property type="match status" value="1"/>
</dbReference>
<dbReference type="Gene3D" id="3.40.50.1440">
    <property type="entry name" value="Tubulin/FtsZ, GTPase domain"/>
    <property type="match status" value="1"/>
</dbReference>
<dbReference type="HAMAP" id="MF_00909">
    <property type="entry name" value="FtsZ"/>
    <property type="match status" value="1"/>
</dbReference>
<dbReference type="InterPro" id="IPR000158">
    <property type="entry name" value="Cell_div_FtsZ"/>
</dbReference>
<dbReference type="InterPro" id="IPR020805">
    <property type="entry name" value="Cell_div_FtsZ_CS"/>
</dbReference>
<dbReference type="InterPro" id="IPR045061">
    <property type="entry name" value="FtsZ/CetZ"/>
</dbReference>
<dbReference type="InterPro" id="IPR024757">
    <property type="entry name" value="FtsZ_C"/>
</dbReference>
<dbReference type="InterPro" id="IPR008280">
    <property type="entry name" value="Tub_FtsZ_C"/>
</dbReference>
<dbReference type="InterPro" id="IPR037103">
    <property type="entry name" value="Tubulin/FtsZ-like_C"/>
</dbReference>
<dbReference type="InterPro" id="IPR018316">
    <property type="entry name" value="Tubulin/FtsZ_2-layer-sand-dom"/>
</dbReference>
<dbReference type="InterPro" id="IPR036525">
    <property type="entry name" value="Tubulin/FtsZ_GTPase_sf"/>
</dbReference>
<dbReference type="InterPro" id="IPR003008">
    <property type="entry name" value="Tubulin_FtsZ_GTPase"/>
</dbReference>
<dbReference type="NCBIfam" id="TIGR00065">
    <property type="entry name" value="ftsZ"/>
    <property type="match status" value="1"/>
</dbReference>
<dbReference type="PANTHER" id="PTHR30314">
    <property type="entry name" value="CELL DIVISION PROTEIN FTSZ-RELATED"/>
    <property type="match status" value="1"/>
</dbReference>
<dbReference type="PANTHER" id="PTHR30314:SF3">
    <property type="entry name" value="MITOCHONDRIAL DIVISION PROTEIN FSZA"/>
    <property type="match status" value="1"/>
</dbReference>
<dbReference type="Pfam" id="PF12327">
    <property type="entry name" value="FtsZ_C"/>
    <property type="match status" value="1"/>
</dbReference>
<dbReference type="Pfam" id="PF00091">
    <property type="entry name" value="Tubulin"/>
    <property type="match status" value="1"/>
</dbReference>
<dbReference type="PRINTS" id="PR00423">
    <property type="entry name" value="CELLDVISFTSZ"/>
</dbReference>
<dbReference type="SMART" id="SM00864">
    <property type="entry name" value="Tubulin"/>
    <property type="match status" value="1"/>
</dbReference>
<dbReference type="SMART" id="SM00865">
    <property type="entry name" value="Tubulin_C"/>
    <property type="match status" value="1"/>
</dbReference>
<dbReference type="SUPFAM" id="SSF55307">
    <property type="entry name" value="Tubulin C-terminal domain-like"/>
    <property type="match status" value="1"/>
</dbReference>
<dbReference type="SUPFAM" id="SSF52490">
    <property type="entry name" value="Tubulin nucleotide-binding domain-like"/>
    <property type="match status" value="1"/>
</dbReference>
<dbReference type="PROSITE" id="PS01134">
    <property type="entry name" value="FTSZ_1"/>
    <property type="match status" value="1"/>
</dbReference>
<dbReference type="PROSITE" id="PS01135">
    <property type="entry name" value="FTSZ_2"/>
    <property type="match status" value="1"/>
</dbReference>
<organism>
    <name type="scientific">Mycobacterium kansasii</name>
    <dbReference type="NCBI Taxonomy" id="1768"/>
    <lineage>
        <taxon>Bacteria</taxon>
        <taxon>Bacillati</taxon>
        <taxon>Actinomycetota</taxon>
        <taxon>Actinomycetes</taxon>
        <taxon>Mycobacteriales</taxon>
        <taxon>Mycobacteriaceae</taxon>
        <taxon>Mycobacterium</taxon>
    </lineage>
</organism>
<feature type="chain" id="PRO_0000114363" description="Cell division protein FtsZ">
    <location>
        <begin position="1"/>
        <end position="386"/>
    </location>
</feature>
<feature type="binding site" evidence="1">
    <location>
        <begin position="18"/>
        <end position="22"/>
    </location>
    <ligand>
        <name>GTP</name>
        <dbReference type="ChEBI" id="CHEBI:37565"/>
    </ligand>
</feature>
<feature type="binding site" evidence="1">
    <location>
        <begin position="105"/>
        <end position="107"/>
    </location>
    <ligand>
        <name>GTP</name>
        <dbReference type="ChEBI" id="CHEBI:37565"/>
    </ligand>
</feature>
<feature type="binding site" evidence="1">
    <location>
        <position position="136"/>
    </location>
    <ligand>
        <name>GTP</name>
        <dbReference type="ChEBI" id="CHEBI:37565"/>
    </ligand>
</feature>
<feature type="binding site" evidence="1">
    <location>
        <position position="140"/>
    </location>
    <ligand>
        <name>GTP</name>
        <dbReference type="ChEBI" id="CHEBI:37565"/>
    </ligand>
</feature>
<feature type="binding site" evidence="1">
    <location>
        <position position="184"/>
    </location>
    <ligand>
        <name>GTP</name>
        <dbReference type="ChEBI" id="CHEBI:37565"/>
    </ligand>
</feature>
<gene>
    <name evidence="1" type="primary">ftsZ</name>
</gene>
<reference key="1">
    <citation type="submission" date="2000-11" db="EMBL/GenBank/DDBJ databases">
        <title>ftsZ gene of M. kansasii.</title>
        <authorList>
            <person name="Ramanujam S."/>
            <person name="Ajitkumar P."/>
        </authorList>
    </citation>
    <scope>NUCLEOTIDE SEQUENCE [GENOMIC DNA]</scope>
</reference>
<proteinExistence type="inferred from homology"/>